<accession>Q5UQP5</accession>
<keyword id="KW-1185">Reference proteome</keyword>
<keyword id="KW-0946">Virion</keyword>
<comment type="subcellular location">
    <subcellularLocation>
        <location evidence="1">Virion</location>
    </subcellularLocation>
</comment>
<comment type="similarity">
    <text evidence="2">Belongs to the mimivirus R457/R459 family.</text>
</comment>
<feature type="chain" id="PRO_0000071285" description="Uncharacterized protein R457">
    <location>
        <begin position="1"/>
        <end position="189"/>
    </location>
</feature>
<protein>
    <recommendedName>
        <fullName>Uncharacterized protein R457</fullName>
    </recommendedName>
</protein>
<name>YR457_MIMIV</name>
<dbReference type="EMBL" id="AY653733">
    <property type="protein sequence ID" value="AAV50723.1"/>
    <property type="molecule type" value="Genomic_DNA"/>
</dbReference>
<dbReference type="KEGG" id="vg:9925082"/>
<dbReference type="OrthoDB" id="11999at10239"/>
<dbReference type="Proteomes" id="UP000001134">
    <property type="component" value="Genome"/>
</dbReference>
<dbReference type="GO" id="GO:0044423">
    <property type="term" value="C:virion component"/>
    <property type="evidence" value="ECO:0007669"/>
    <property type="project" value="UniProtKB-KW"/>
</dbReference>
<evidence type="ECO:0000269" key="1">
    <source>
    </source>
</evidence>
<evidence type="ECO:0000305" key="2"/>
<reference key="1">
    <citation type="journal article" date="2004" name="Science">
        <title>The 1.2-megabase genome sequence of Mimivirus.</title>
        <authorList>
            <person name="Raoult D."/>
            <person name="Audic S."/>
            <person name="Robert C."/>
            <person name="Abergel C."/>
            <person name="Renesto P."/>
            <person name="Ogata H."/>
            <person name="La Scola B."/>
            <person name="Susan M."/>
            <person name="Claverie J.-M."/>
        </authorList>
    </citation>
    <scope>NUCLEOTIDE SEQUENCE [LARGE SCALE GENOMIC DNA]</scope>
    <source>
        <strain>Rowbotham-Bradford</strain>
    </source>
</reference>
<reference key="2">
    <citation type="journal article" date="2006" name="J. Virol.">
        <title>Mimivirus giant particles incorporate a large fraction of anonymous and unique gene products.</title>
        <authorList>
            <person name="Renesto P."/>
            <person name="Abergel C."/>
            <person name="Decloquement P."/>
            <person name="Moinier D."/>
            <person name="Azza S."/>
            <person name="Ogata H."/>
            <person name="Fourquet P."/>
            <person name="Gorvel J.-P."/>
            <person name="Claverie J.-M."/>
            <person name="Raoult D."/>
        </authorList>
    </citation>
    <scope>IDENTIFICATION BY MASS SPECTROMETRY [LARGE SCALE ANALYSIS]</scope>
    <scope>SUBCELLULAR LOCATION</scope>
</reference>
<organism>
    <name type="scientific">Acanthamoeba polyphaga mimivirus</name>
    <name type="common">APMV</name>
    <dbReference type="NCBI Taxonomy" id="212035"/>
    <lineage>
        <taxon>Viruses</taxon>
        <taxon>Varidnaviria</taxon>
        <taxon>Bamfordvirae</taxon>
        <taxon>Nucleocytoviricota</taxon>
        <taxon>Megaviricetes</taxon>
        <taxon>Imitervirales</taxon>
        <taxon>Mimiviridae</taxon>
        <taxon>Megamimivirinae</taxon>
        <taxon>Mimivirus</taxon>
        <taxon>Mimivirus bradfordmassiliense</taxon>
    </lineage>
</organism>
<proteinExistence type="evidence at protein level"/>
<organismHost>
    <name type="scientific">Acanthamoeba polyphaga</name>
    <name type="common">Amoeba</name>
    <dbReference type="NCBI Taxonomy" id="5757"/>
</organismHost>
<sequence length="189" mass="21376">MAGKFTNMRYDNQAYNEEIRRSTDPLLYKLDSNYSVNCSPCFAAHGPIGGHNNSVAIGNQIDVDSVLRGVGRINSKSNQQQAPESLNQYTMYTPRECSPSLESHHSRFSHPAHDIRGLNVPDMRLGYPLHDPQCQIFEDFGVNTRLQAKDNHRAVWQQPMDQKSVYPKARPGREKNCTVSVNCTYAPYS</sequence>
<gene>
    <name type="ordered locus">MIMI_R457</name>
</gene>